<name>VATE_BORBU</name>
<accession>O51123</accession>
<organism>
    <name type="scientific">Borreliella burgdorferi (strain ATCC 35210 / DSM 4680 / CIP 102532 / B31)</name>
    <name type="common">Borrelia burgdorferi</name>
    <dbReference type="NCBI Taxonomy" id="224326"/>
    <lineage>
        <taxon>Bacteria</taxon>
        <taxon>Pseudomonadati</taxon>
        <taxon>Spirochaetota</taxon>
        <taxon>Spirochaetia</taxon>
        <taxon>Spirochaetales</taxon>
        <taxon>Borreliaceae</taxon>
        <taxon>Borreliella</taxon>
    </lineage>
</organism>
<protein>
    <recommendedName>
        <fullName>V-type ATP synthase subunit E</fullName>
    </recommendedName>
    <alternativeName>
        <fullName>V-ATPase subunit E</fullName>
    </alternativeName>
</protein>
<dbReference type="EMBL" id="AE000783">
    <property type="protein sequence ID" value="AAC66482.2"/>
    <property type="molecule type" value="Genomic_DNA"/>
</dbReference>
<dbReference type="PIR" id="H70111">
    <property type="entry name" value="H70111"/>
</dbReference>
<dbReference type="RefSeq" id="NP_212230.2">
    <property type="nucleotide sequence ID" value="NC_001318.1"/>
</dbReference>
<dbReference type="RefSeq" id="WP_002655964.1">
    <property type="nucleotide sequence ID" value="NC_001318.1"/>
</dbReference>
<dbReference type="SMR" id="O51123"/>
<dbReference type="STRING" id="224326.BB_0096"/>
<dbReference type="PaxDb" id="224326-BB_0096"/>
<dbReference type="EnsemblBacteria" id="AAC66482">
    <property type="protein sequence ID" value="AAC66482"/>
    <property type="gene ID" value="BB_0096"/>
</dbReference>
<dbReference type="KEGG" id="bbu:BB_0096"/>
<dbReference type="PATRIC" id="fig|224326.49.peg.494"/>
<dbReference type="HOGENOM" id="CLU_105793_0_1_12"/>
<dbReference type="OrthoDB" id="1771105at2"/>
<dbReference type="Proteomes" id="UP000001807">
    <property type="component" value="Chromosome"/>
</dbReference>
<dbReference type="GO" id="GO:0033178">
    <property type="term" value="C:proton-transporting two-sector ATPase complex, catalytic domain"/>
    <property type="evidence" value="ECO:0007669"/>
    <property type="project" value="InterPro"/>
</dbReference>
<dbReference type="GO" id="GO:0005524">
    <property type="term" value="F:ATP binding"/>
    <property type="evidence" value="ECO:0007669"/>
    <property type="project" value="UniProtKB-UniRule"/>
</dbReference>
<dbReference type="GO" id="GO:0046933">
    <property type="term" value="F:proton-transporting ATP synthase activity, rotational mechanism"/>
    <property type="evidence" value="ECO:0007669"/>
    <property type="project" value="UniProtKB-UniRule"/>
</dbReference>
<dbReference type="GO" id="GO:0046961">
    <property type="term" value="F:proton-transporting ATPase activity, rotational mechanism"/>
    <property type="evidence" value="ECO:0007669"/>
    <property type="project" value="InterPro"/>
</dbReference>
<dbReference type="GO" id="GO:0042777">
    <property type="term" value="P:proton motive force-driven plasma membrane ATP synthesis"/>
    <property type="evidence" value="ECO:0007669"/>
    <property type="project" value="UniProtKB-UniRule"/>
</dbReference>
<dbReference type="HAMAP" id="MF_00311">
    <property type="entry name" value="ATP_synth_E_arch"/>
    <property type="match status" value="1"/>
</dbReference>
<dbReference type="InterPro" id="IPR002842">
    <property type="entry name" value="ATPase_V1_Esu"/>
</dbReference>
<dbReference type="NCBIfam" id="NF002424">
    <property type="entry name" value="PRK01558.1"/>
    <property type="match status" value="1"/>
</dbReference>
<feature type="chain" id="PRO_0000117329" description="V-type ATP synthase subunit E">
    <location>
        <begin position="1"/>
        <end position="199"/>
    </location>
</feature>
<reference key="1">
    <citation type="journal article" date="1997" name="Nature">
        <title>Genomic sequence of a Lyme disease spirochaete, Borrelia burgdorferi.</title>
        <authorList>
            <person name="Fraser C.M."/>
            <person name="Casjens S."/>
            <person name="Huang W.M."/>
            <person name="Sutton G.G."/>
            <person name="Clayton R.A."/>
            <person name="Lathigra R."/>
            <person name="White O."/>
            <person name="Ketchum K.A."/>
            <person name="Dodson R.J."/>
            <person name="Hickey E.K."/>
            <person name="Gwinn M.L."/>
            <person name="Dougherty B.A."/>
            <person name="Tomb J.-F."/>
            <person name="Fleischmann R.D."/>
            <person name="Richardson D.L."/>
            <person name="Peterson J.D."/>
            <person name="Kerlavage A.R."/>
            <person name="Quackenbush J."/>
            <person name="Salzberg S.L."/>
            <person name="Hanson M."/>
            <person name="van Vugt R."/>
            <person name="Palmer N."/>
            <person name="Adams M.D."/>
            <person name="Gocayne J.D."/>
            <person name="Weidman J.F."/>
            <person name="Utterback T.R."/>
            <person name="Watthey L."/>
            <person name="McDonald L.A."/>
            <person name="Artiach P."/>
            <person name="Bowman C."/>
            <person name="Garland S.A."/>
            <person name="Fujii C."/>
            <person name="Cotton M.D."/>
            <person name="Horst K."/>
            <person name="Roberts K.M."/>
            <person name="Hatch B."/>
            <person name="Smith H.O."/>
            <person name="Venter J.C."/>
        </authorList>
    </citation>
    <scope>NUCLEOTIDE SEQUENCE [LARGE SCALE GENOMIC DNA]</scope>
    <source>
        <strain>ATCC 35210 / DSM 4680 / CIP 102532 / B31</strain>
    </source>
</reference>
<proteinExistence type="inferred from homology"/>
<sequence length="199" mass="22720">MQFEVKDLINKIKKDGLEEAERASNDIILKAKREAEEIVARAEEAARVLKAKSEKEANDYKCHALEASRQAIRDLIIGVEKNLKSLFENALKDNVTEVLSDNNFLAELIIKITDSWAKGEKLVIQLNESDFSSLEQILRLKLGNKLKEGMELRPFRGISKGFKIQKKNIGLHYDFSAETIADILFDYLNPRFKEVIKVV</sequence>
<gene>
    <name type="primary">atpE</name>
    <name type="ordered locus">BB_0096</name>
</gene>
<comment type="function">
    <text evidence="1">Produces ATP from ADP in the presence of a proton gradient across the membrane.</text>
</comment>
<comment type="similarity">
    <text evidence="2">Belongs to the V-ATPase E subunit family.</text>
</comment>
<evidence type="ECO:0000250" key="1"/>
<evidence type="ECO:0000305" key="2"/>
<keyword id="KW-0066">ATP synthesis</keyword>
<keyword id="KW-0375">Hydrogen ion transport</keyword>
<keyword id="KW-0406">Ion transport</keyword>
<keyword id="KW-1185">Reference proteome</keyword>
<keyword id="KW-0813">Transport</keyword>